<dbReference type="EMBL" id="AE005176">
    <property type="protein sequence ID" value="AAK04156.1"/>
    <property type="molecule type" value="Genomic_DNA"/>
</dbReference>
<dbReference type="PIR" id="B86632">
    <property type="entry name" value="B86632"/>
</dbReference>
<dbReference type="RefSeq" id="NP_266214.1">
    <property type="nucleotide sequence ID" value="NC_002662.1"/>
</dbReference>
<dbReference type="RefSeq" id="WP_003132217.1">
    <property type="nucleotide sequence ID" value="NC_002662.1"/>
</dbReference>
<dbReference type="SMR" id="Q9CJD9"/>
<dbReference type="PaxDb" id="272623-L1006"/>
<dbReference type="EnsemblBacteria" id="AAK04156">
    <property type="protein sequence ID" value="AAK04156"/>
    <property type="gene ID" value="L1006"/>
</dbReference>
<dbReference type="GeneID" id="89632210"/>
<dbReference type="KEGG" id="lla:L1006"/>
<dbReference type="PATRIC" id="fig|272623.7.peg.62"/>
<dbReference type="eggNOG" id="COG1381">
    <property type="taxonomic scope" value="Bacteria"/>
</dbReference>
<dbReference type="HOGENOM" id="CLU_066632_4_0_9"/>
<dbReference type="OrthoDB" id="9797083at2"/>
<dbReference type="Proteomes" id="UP000002196">
    <property type="component" value="Chromosome"/>
</dbReference>
<dbReference type="GO" id="GO:0043590">
    <property type="term" value="C:bacterial nucleoid"/>
    <property type="evidence" value="ECO:0007669"/>
    <property type="project" value="TreeGrafter"/>
</dbReference>
<dbReference type="GO" id="GO:0006310">
    <property type="term" value="P:DNA recombination"/>
    <property type="evidence" value="ECO:0007669"/>
    <property type="project" value="UniProtKB-UniRule"/>
</dbReference>
<dbReference type="GO" id="GO:0006302">
    <property type="term" value="P:double-strand break repair"/>
    <property type="evidence" value="ECO:0007669"/>
    <property type="project" value="TreeGrafter"/>
</dbReference>
<dbReference type="Gene3D" id="2.40.50.140">
    <property type="entry name" value="Nucleic acid-binding proteins"/>
    <property type="match status" value="1"/>
</dbReference>
<dbReference type="Gene3D" id="1.20.1440.120">
    <property type="entry name" value="Recombination protein O, C-terminal domain"/>
    <property type="match status" value="1"/>
</dbReference>
<dbReference type="HAMAP" id="MF_00201">
    <property type="entry name" value="RecO"/>
    <property type="match status" value="1"/>
</dbReference>
<dbReference type="InterPro" id="IPR037278">
    <property type="entry name" value="ARFGAP/RecO"/>
</dbReference>
<dbReference type="InterPro" id="IPR022572">
    <property type="entry name" value="DNA_rep/recomb_RecO_N"/>
</dbReference>
<dbReference type="InterPro" id="IPR012340">
    <property type="entry name" value="NA-bd_OB-fold"/>
</dbReference>
<dbReference type="InterPro" id="IPR003717">
    <property type="entry name" value="RecO"/>
</dbReference>
<dbReference type="InterPro" id="IPR042242">
    <property type="entry name" value="RecO_C"/>
</dbReference>
<dbReference type="NCBIfam" id="TIGR00613">
    <property type="entry name" value="reco"/>
    <property type="match status" value="1"/>
</dbReference>
<dbReference type="PANTHER" id="PTHR33991">
    <property type="entry name" value="DNA REPAIR PROTEIN RECO"/>
    <property type="match status" value="1"/>
</dbReference>
<dbReference type="PANTHER" id="PTHR33991:SF1">
    <property type="entry name" value="DNA REPAIR PROTEIN RECO"/>
    <property type="match status" value="1"/>
</dbReference>
<dbReference type="Pfam" id="PF02565">
    <property type="entry name" value="RecO_C"/>
    <property type="match status" value="1"/>
</dbReference>
<dbReference type="Pfam" id="PF11967">
    <property type="entry name" value="RecO_N"/>
    <property type="match status" value="1"/>
</dbReference>
<dbReference type="SUPFAM" id="SSF57863">
    <property type="entry name" value="ArfGap/RecO-like zinc finger"/>
    <property type="match status" value="1"/>
</dbReference>
<dbReference type="SUPFAM" id="SSF50249">
    <property type="entry name" value="Nucleic acid-binding proteins"/>
    <property type="match status" value="1"/>
</dbReference>
<reference key="1">
    <citation type="journal article" date="2001" name="Genome Res.">
        <title>The complete genome sequence of the lactic acid bacterium Lactococcus lactis ssp. lactis IL1403.</title>
        <authorList>
            <person name="Bolotin A."/>
            <person name="Wincker P."/>
            <person name="Mauger S."/>
            <person name="Jaillon O."/>
            <person name="Malarme K."/>
            <person name="Weissenbach J."/>
            <person name="Ehrlich S.D."/>
            <person name="Sorokin A."/>
        </authorList>
    </citation>
    <scope>NUCLEOTIDE SEQUENCE [LARGE SCALE GENOMIC DNA]</scope>
    <source>
        <strain>IL1403</strain>
    </source>
</reference>
<name>RECO_LACLA</name>
<protein>
    <recommendedName>
        <fullName>DNA repair protein RecO</fullName>
    </recommendedName>
    <alternativeName>
        <fullName>Recombination protein O</fullName>
    </alternativeName>
</protein>
<sequence>MRDAETQGLVLYSRNYKEKDKLVKIFTESFGKRMFFVKNFGKSPYASSLQAFTDGKLTATINDGGFSFIEDVSEVVVYKNISSDIFINAHASYIISLADAAISDNQYDPGLYGFLKRSLELLDQGFDMEVVTNIFELQVLHRFGISLNFSECAFCHKTVGPFDFSYKFSGCLCPQHFDEDLRRSHLDPNVIYLVNLFQEISLDELKKISIKADMKLKIRQFIDGLYDEYVGIHLKSKKFLDGMSGWADIMK</sequence>
<accession>Q9CJD9</accession>
<comment type="function">
    <text evidence="1">Involved in DNA repair and RecF pathway recombination.</text>
</comment>
<comment type="similarity">
    <text evidence="2">Belongs to the RecO family.</text>
</comment>
<organism>
    <name type="scientific">Lactococcus lactis subsp. lactis (strain IL1403)</name>
    <name type="common">Streptococcus lactis</name>
    <dbReference type="NCBI Taxonomy" id="272623"/>
    <lineage>
        <taxon>Bacteria</taxon>
        <taxon>Bacillati</taxon>
        <taxon>Bacillota</taxon>
        <taxon>Bacilli</taxon>
        <taxon>Lactobacillales</taxon>
        <taxon>Streptococcaceae</taxon>
        <taxon>Lactococcus</taxon>
    </lineage>
</organism>
<keyword id="KW-0227">DNA damage</keyword>
<keyword id="KW-0233">DNA recombination</keyword>
<keyword id="KW-0234">DNA repair</keyword>
<keyword id="KW-1185">Reference proteome</keyword>
<gene>
    <name type="primary">recO</name>
    <name type="ordered locus">LL0058</name>
    <name type="ORF">L1006</name>
</gene>
<proteinExistence type="inferred from homology"/>
<evidence type="ECO:0000250" key="1"/>
<evidence type="ECO:0000305" key="2"/>
<feature type="chain" id="PRO_0000204962" description="DNA repair protein RecO">
    <location>
        <begin position="1"/>
        <end position="251"/>
    </location>
</feature>